<proteinExistence type="evidence at protein level"/>
<sequence>MRRLTVRLFTAVLAALALLTMGTPAHATAPASPSVTFTNPLAEKRADPHIFKHTDGYYYFTATVPEYDRIVLRRATTLQGLATAPETTIWTKHASGVMGAHIWAPEIHFIDGKWYVYFAAGSTSDVWAIRMYVLESGAANPLTGSWTEKGQIATPVSSFSLDATTFVVNGVRHLAWAQRNPAEDNNTSLFIAKMANPWTISGTPTEISQPTLSWETVGYKVNEGPAVIQHGGKVFLTYSASATDANYCLGMLSASASADLLNAASWTKSSQPVFKTSEATGQYGPGHNSFTVSEDGKSDILVYHDRNYKDISGDPLNDPNRRTRLQKVYWNADGTPNFGIPVADGVTPVRFSSYNYPDRYIRHWDFRARIEANVTNLADSQFRVVTGLAGSGTISLESANYPGYYLRHKNYEVWVEKNDGSSAFKNDASFSRRAGLADSADGIAFESYNYPGRYLRHYENLLRIQPVSTALDRQDATFYAE</sequence>
<accession>Q82P90</accession>
<feature type="signal peptide" evidence="1">
    <location>
        <begin position="1"/>
        <end position="27"/>
    </location>
</feature>
<feature type="chain" id="PRO_5004300134" description="Extracellular exo-alpha-(1-&gt;5)-L-arabinofuranosidase">
    <location>
        <begin position="28"/>
        <end position="481"/>
    </location>
</feature>
<feature type="region of interest" description="Catalytic" evidence="1">
    <location>
        <begin position="37"/>
        <end position="336"/>
    </location>
</feature>
<feature type="region of interest" description="ABD" evidence="1">
    <location>
        <begin position="349"/>
        <end position="479"/>
    </location>
</feature>
<feature type="active site" description="Proton acceptor" evidence="7">
    <location>
        <position position="47"/>
    </location>
</feature>
<feature type="active site" description="Proton donor" evidence="7">
    <location>
        <position position="223"/>
    </location>
</feature>
<feature type="binding site" evidence="3">
    <location>
        <position position="186"/>
    </location>
    <ligand>
        <name>substrate</name>
    </ligand>
</feature>
<feature type="binding site" evidence="3">
    <location>
        <position position="287"/>
    </location>
    <ligand>
        <name>substrate</name>
    </ligand>
</feature>
<feature type="binding site" evidence="3">
    <location>
        <position position="321"/>
    </location>
    <ligand>
        <name>substrate</name>
    </ligand>
</feature>
<feature type="binding site" evidence="3">
    <location>
        <begin position="363"/>
        <end position="366"/>
    </location>
    <ligand>
        <name>substrate</name>
    </ligand>
</feature>
<feature type="binding site" evidence="3">
    <location>
        <position position="379"/>
    </location>
    <ligand>
        <name>substrate</name>
    </ligand>
</feature>
<feature type="binding site" evidence="3">
    <location>
        <begin position="457"/>
        <end position="460"/>
    </location>
    <ligand>
        <name>substrate</name>
    </ligand>
</feature>
<feature type="binding site" evidence="3">
    <location>
        <position position="475"/>
    </location>
    <ligand>
        <name>substrate</name>
    </ligand>
</feature>
<feature type="site" description="Important for catalytic activity, responsible for pKa modulation of the active site Glu and correct orientation of both the proton donor and substrate" evidence="7">
    <location>
        <position position="162"/>
    </location>
</feature>
<feature type="mutagenesis site" description="Abolishes catalytic activity." evidence="3">
    <original>D</original>
    <variation>A</variation>
    <location>
        <position position="47"/>
    </location>
</feature>
<feature type="mutagenesis site" description="Maintains an extremely weak catalytic activity." evidence="3">
    <original>D</original>
    <variation>N</variation>
    <location>
        <position position="47"/>
    </location>
</feature>
<feature type="mutagenesis site" description="Abolishes catalytic activity." evidence="3">
    <original>D</original>
    <variation>A</variation>
    <variation>N</variation>
    <location>
        <position position="162"/>
    </location>
</feature>
<feature type="mutagenesis site" description="Reduces substrate specificity." evidence="3">
    <original>N</original>
    <variation>A</variation>
    <variation>L</variation>
    <location>
        <position position="186"/>
    </location>
</feature>
<feature type="mutagenesis site" description="Reduces substrate specificity and allows hydrolysis of alpha-1,5-linked arabinofuranosyl bonds." evidence="3">
    <original>Y</original>
    <variation>A</variation>
    <location>
        <position position="219"/>
    </location>
</feature>
<feature type="mutagenesis site" description="Abolishes catalytic activity." evidence="3">
    <original>E</original>
    <variation>A</variation>
    <location>
        <position position="223"/>
    </location>
</feature>
<feature type="mutagenesis site" description="Reduces substrate specificity and allows hydrolysis of alpha-1,5-linked arabinofuranosyl bonds." evidence="3">
    <original>L</original>
    <variation>A</variation>
    <location>
        <position position="316"/>
    </location>
</feature>
<feature type="strand" evidence="12">
    <location>
        <begin position="46"/>
        <end position="52"/>
    </location>
</feature>
<feature type="strand" evidence="12">
    <location>
        <begin position="58"/>
        <end position="63"/>
    </location>
</feature>
<feature type="strand" evidence="12">
    <location>
        <begin position="69"/>
        <end position="77"/>
    </location>
</feature>
<feature type="helix" evidence="12">
    <location>
        <begin position="79"/>
        <end position="83"/>
    </location>
</feature>
<feature type="strand" evidence="12">
    <location>
        <begin position="87"/>
        <end position="91"/>
    </location>
</feature>
<feature type="strand" evidence="12">
    <location>
        <begin position="94"/>
        <end position="96"/>
    </location>
</feature>
<feature type="strand" evidence="12">
    <location>
        <begin position="100"/>
        <end position="110"/>
    </location>
</feature>
<feature type="strand" evidence="12">
    <location>
        <begin position="113"/>
        <end position="121"/>
    </location>
</feature>
<feature type="strand" evidence="12">
    <location>
        <begin position="130"/>
        <end position="136"/>
    </location>
</feature>
<feature type="turn" evidence="12">
    <location>
        <begin position="141"/>
        <end position="143"/>
    </location>
</feature>
<feature type="strand" evidence="12">
    <location>
        <begin position="147"/>
        <end position="151"/>
    </location>
</feature>
<feature type="strand" evidence="12">
    <location>
        <begin position="160"/>
        <end position="168"/>
    </location>
</feature>
<feature type="strand" evidence="12">
    <location>
        <begin position="171"/>
        <end position="178"/>
    </location>
</feature>
<feature type="strand" evidence="12">
    <location>
        <begin position="183"/>
        <end position="196"/>
    </location>
</feature>
<feature type="strand" evidence="12">
    <location>
        <begin position="199"/>
        <end position="208"/>
    </location>
</feature>
<feature type="helix" evidence="12">
    <location>
        <begin position="213"/>
        <end position="215"/>
    </location>
</feature>
<feature type="strand" evidence="12">
    <location>
        <begin position="217"/>
        <end position="219"/>
    </location>
</feature>
<feature type="strand" evidence="12">
    <location>
        <begin position="221"/>
        <end position="230"/>
    </location>
</feature>
<feature type="strand" evidence="12">
    <location>
        <begin position="233"/>
        <end position="241"/>
    </location>
</feature>
<feature type="strand" evidence="12">
    <location>
        <begin position="248"/>
        <end position="255"/>
    </location>
</feature>
<feature type="helix" evidence="12">
    <location>
        <begin position="263"/>
        <end position="265"/>
    </location>
</feature>
<feature type="turn" evidence="12">
    <location>
        <begin position="278"/>
        <end position="281"/>
    </location>
</feature>
<feature type="strand" evidence="12">
    <location>
        <begin position="282"/>
        <end position="292"/>
    </location>
</feature>
<feature type="strand" evidence="12">
    <location>
        <begin position="298"/>
        <end position="310"/>
    </location>
</feature>
<feature type="helix" evidence="12">
    <location>
        <begin position="315"/>
        <end position="317"/>
    </location>
</feature>
<feature type="strand" evidence="12">
    <location>
        <begin position="322"/>
        <end position="327"/>
    </location>
</feature>
<feature type="strand" evidence="12">
    <location>
        <begin position="344"/>
        <end position="346"/>
    </location>
</feature>
<feature type="strand" evidence="12">
    <location>
        <begin position="351"/>
        <end position="356"/>
    </location>
</feature>
<feature type="strand" evidence="12">
    <location>
        <begin position="360"/>
        <end position="364"/>
    </location>
</feature>
<feature type="strand" evidence="12">
    <location>
        <begin position="367"/>
        <end position="373"/>
    </location>
</feature>
<feature type="helix" evidence="12">
    <location>
        <begin position="377"/>
        <end position="380"/>
    </location>
</feature>
<feature type="strand" evidence="12">
    <location>
        <begin position="382"/>
        <end position="386"/>
    </location>
</feature>
<feature type="strand" evidence="12">
    <location>
        <begin position="394"/>
        <end position="401"/>
    </location>
</feature>
<feature type="strand" evidence="12">
    <location>
        <begin position="404"/>
        <end position="409"/>
    </location>
</feature>
<feature type="strand" evidence="12">
    <location>
        <begin position="412"/>
        <end position="417"/>
    </location>
</feature>
<feature type="helix" evidence="12">
    <location>
        <begin position="422"/>
        <end position="427"/>
    </location>
</feature>
<feature type="strand" evidence="12">
    <location>
        <begin position="430"/>
        <end position="434"/>
    </location>
</feature>
<feature type="turn" evidence="12">
    <location>
        <begin position="439"/>
        <end position="441"/>
    </location>
</feature>
<feature type="strand" evidence="12">
    <location>
        <begin position="443"/>
        <end position="450"/>
    </location>
</feature>
<feature type="strand" evidence="12">
    <location>
        <begin position="453"/>
        <end position="458"/>
    </location>
</feature>
<feature type="strand" evidence="12">
    <location>
        <begin position="461"/>
        <end position="466"/>
    </location>
</feature>
<feature type="helix" evidence="12">
    <location>
        <begin position="470"/>
        <end position="475"/>
    </location>
</feature>
<feature type="strand" evidence="12">
    <location>
        <begin position="478"/>
        <end position="480"/>
    </location>
</feature>
<organism>
    <name type="scientific">Streptomyces avermitilis (strain ATCC 31267 / DSM 46492 / JCM 5070 / NBRC 14893 / NCIMB 12804 / NRRL 8165 / MA-4680)</name>
    <dbReference type="NCBI Taxonomy" id="227882"/>
    <lineage>
        <taxon>Bacteria</taxon>
        <taxon>Bacillati</taxon>
        <taxon>Actinomycetota</taxon>
        <taxon>Actinomycetes</taxon>
        <taxon>Kitasatosporales</taxon>
        <taxon>Streptomycetaceae</taxon>
        <taxon>Streptomyces</taxon>
    </lineage>
</organism>
<keyword id="KW-0002">3D-structure</keyword>
<keyword id="KW-0119">Carbohydrate metabolism</keyword>
<keyword id="KW-0326">Glycosidase</keyword>
<keyword id="KW-0378">Hydrolase</keyword>
<keyword id="KW-1185">Reference proteome</keyword>
<keyword id="KW-0964">Secreted</keyword>
<keyword id="KW-0732">Signal</keyword>
<protein>
    <recommendedName>
        <fullName evidence="6">Extracellular exo-alpha-(1-&gt;5)-L-arabinofuranosidase</fullName>
        <ecNumber evidence="2">3.2.1.55</ecNumber>
    </recommendedName>
</protein>
<name>IABF_STRAW</name>
<gene>
    <name evidence="4" type="primary">Araf43A</name>
    <name type="synonym">abfA</name>
    <name evidence="8" type="ordered locus">SAV_1043</name>
    <name evidence="8" type="ORF">SAVERM_1043</name>
</gene>
<dbReference type="EC" id="3.2.1.55" evidence="2"/>
<dbReference type="EMBL" id="BA000030">
    <property type="protein sequence ID" value="BAC68753.1"/>
    <property type="molecule type" value="Genomic_DNA"/>
</dbReference>
<dbReference type="PDB" id="3AKF">
    <property type="method" value="X-ray"/>
    <property type="resolution" value="2.20 A"/>
    <property type="chains" value="A=28-481"/>
</dbReference>
<dbReference type="PDB" id="3AKG">
    <property type="method" value="X-ray"/>
    <property type="resolution" value="1.80 A"/>
    <property type="chains" value="A=28-481"/>
</dbReference>
<dbReference type="PDB" id="3AKH">
    <property type="method" value="X-ray"/>
    <property type="resolution" value="1.70 A"/>
    <property type="chains" value="A=28-481"/>
</dbReference>
<dbReference type="PDB" id="3AKI">
    <property type="method" value="X-ray"/>
    <property type="resolution" value="2.00 A"/>
    <property type="chains" value="A=28-481"/>
</dbReference>
<dbReference type="PDBsum" id="3AKF"/>
<dbReference type="PDBsum" id="3AKG"/>
<dbReference type="PDBsum" id="3AKH"/>
<dbReference type="PDBsum" id="3AKI"/>
<dbReference type="SMR" id="Q82P90"/>
<dbReference type="KEGG" id="sma:SAVERM_1043"/>
<dbReference type="eggNOG" id="COG3940">
    <property type="taxonomic scope" value="Bacteria"/>
</dbReference>
<dbReference type="HOGENOM" id="CLU_009397_2_1_11"/>
<dbReference type="OrthoDB" id="177947at2"/>
<dbReference type="UniPathway" id="UPA00667"/>
<dbReference type="EvolutionaryTrace" id="Q82P90"/>
<dbReference type="Proteomes" id="UP000000428">
    <property type="component" value="Chromosome"/>
</dbReference>
<dbReference type="GO" id="GO:0005576">
    <property type="term" value="C:extracellular region"/>
    <property type="evidence" value="ECO:0007669"/>
    <property type="project" value="UniProtKB-SubCell"/>
</dbReference>
<dbReference type="GO" id="GO:0046556">
    <property type="term" value="F:alpha-L-arabinofuranosidase activity"/>
    <property type="evidence" value="ECO:0007669"/>
    <property type="project" value="UniProtKB-EC"/>
</dbReference>
<dbReference type="GO" id="GO:0031222">
    <property type="term" value="P:arabinan catabolic process"/>
    <property type="evidence" value="ECO:0007669"/>
    <property type="project" value="UniProtKB-UniPathway"/>
</dbReference>
<dbReference type="GO" id="GO:0046373">
    <property type="term" value="P:L-arabinose metabolic process"/>
    <property type="evidence" value="ECO:0007669"/>
    <property type="project" value="InterPro"/>
</dbReference>
<dbReference type="CDD" id="cd23399">
    <property type="entry name" value="beta-trefoil_ABD_ABFB"/>
    <property type="match status" value="1"/>
</dbReference>
<dbReference type="CDD" id="cd18817">
    <property type="entry name" value="GH43f_LbAraf43-like"/>
    <property type="match status" value="1"/>
</dbReference>
<dbReference type="Gene3D" id="2.80.10.50">
    <property type="match status" value="1"/>
</dbReference>
<dbReference type="Gene3D" id="2.115.10.20">
    <property type="entry name" value="Glycosyl hydrolase domain, family 43"/>
    <property type="match status" value="1"/>
</dbReference>
<dbReference type="InterPro" id="IPR007934">
    <property type="entry name" value="AbfB_ABD"/>
</dbReference>
<dbReference type="InterPro" id="IPR036195">
    <property type="entry name" value="AbfB_ABD_sf"/>
</dbReference>
<dbReference type="InterPro" id="IPR006710">
    <property type="entry name" value="Glyco_hydro_43"/>
</dbReference>
<dbReference type="InterPro" id="IPR023296">
    <property type="entry name" value="Glyco_hydro_beta-prop_sf"/>
</dbReference>
<dbReference type="PANTHER" id="PTHR43817">
    <property type="entry name" value="GLYCOSYL HYDROLASE"/>
    <property type="match status" value="1"/>
</dbReference>
<dbReference type="PANTHER" id="PTHR43817:SF1">
    <property type="entry name" value="HYDROLASE, FAMILY 43, PUTATIVE (AFU_ORTHOLOGUE AFUA_3G01660)-RELATED"/>
    <property type="match status" value="1"/>
</dbReference>
<dbReference type="Pfam" id="PF05270">
    <property type="entry name" value="AbfB"/>
    <property type="match status" value="1"/>
</dbReference>
<dbReference type="Pfam" id="PF04616">
    <property type="entry name" value="Glyco_hydro_43"/>
    <property type="match status" value="1"/>
</dbReference>
<dbReference type="SUPFAM" id="SSF110221">
    <property type="entry name" value="AbfB domain"/>
    <property type="match status" value="1"/>
</dbReference>
<dbReference type="SUPFAM" id="SSF75005">
    <property type="entry name" value="Arabinanase/levansucrase/invertase"/>
    <property type="match status" value="1"/>
</dbReference>
<evidence type="ECO:0000255" key="1"/>
<evidence type="ECO:0000269" key="2">
    <source>
    </source>
</evidence>
<evidence type="ECO:0000269" key="3">
    <source>
    </source>
</evidence>
<evidence type="ECO:0000303" key="4">
    <source>
    </source>
</evidence>
<evidence type="ECO:0000305" key="5"/>
<evidence type="ECO:0000305" key="6">
    <source>
    </source>
</evidence>
<evidence type="ECO:0000305" key="7">
    <source>
    </source>
</evidence>
<evidence type="ECO:0000312" key="8">
    <source>
        <dbReference type="EMBL" id="BAC68753.1"/>
    </source>
</evidence>
<evidence type="ECO:0007744" key="9">
    <source>
        <dbReference type="PDB" id="3AKF"/>
    </source>
</evidence>
<evidence type="ECO:0007744" key="10">
    <source>
        <dbReference type="PDB" id="3AKG"/>
    </source>
</evidence>
<evidence type="ECO:0007744" key="11">
    <source>
        <dbReference type="PDB" id="3AKH"/>
    </source>
</evidence>
<evidence type="ECO:0007829" key="12">
    <source>
        <dbReference type="PDB" id="3AKH"/>
    </source>
</evidence>
<reference key="1">
    <citation type="journal article" date="2001" name="Proc. Natl. Acad. Sci. U.S.A.">
        <title>Genome sequence of an industrial microorganism Streptomyces avermitilis: deducing the ability of producing secondary metabolites.</title>
        <authorList>
            <person name="Omura S."/>
            <person name="Ikeda H."/>
            <person name="Ishikawa J."/>
            <person name="Hanamoto A."/>
            <person name="Takahashi C."/>
            <person name="Shinose M."/>
            <person name="Takahashi Y."/>
            <person name="Horikawa H."/>
            <person name="Nakazawa H."/>
            <person name="Osonoe T."/>
            <person name="Kikuchi H."/>
            <person name="Shiba T."/>
            <person name="Sakaki Y."/>
            <person name="Hattori M."/>
        </authorList>
    </citation>
    <scope>NUCLEOTIDE SEQUENCE [LARGE SCALE GENOMIC DNA]</scope>
    <source>
        <strain>ATCC 31267 / DSM 46492 / JCM 5070 / NBRC 14893 / NCIMB 12804 / NRRL 8165 / MA-4680</strain>
    </source>
</reference>
<reference key="2">
    <citation type="journal article" date="2003" name="Nat. Biotechnol.">
        <title>Complete genome sequence and comparative analysis of the industrial microorganism Streptomyces avermitilis.</title>
        <authorList>
            <person name="Ikeda H."/>
            <person name="Ishikawa J."/>
            <person name="Hanamoto A."/>
            <person name="Shinose M."/>
            <person name="Kikuchi H."/>
            <person name="Shiba T."/>
            <person name="Sakaki Y."/>
            <person name="Hattori M."/>
            <person name="Omura S."/>
        </authorList>
    </citation>
    <scope>NUCLEOTIDE SEQUENCE [LARGE SCALE GENOMIC DNA]</scope>
    <source>
        <strain>ATCC 31267 / DSM 46492 / JCM 5070 / NBRC 14893 / NCIMB 12804 / NRRL 8165 / MA-4680</strain>
    </source>
</reference>
<reference key="3">
    <citation type="journal article" date="2008" name="Appl. Microbiol. Biotechnol.">
        <title>Characterization of a modular enzyme of exo-1,5-alpha-L-arabinofuranosidase and arabinan binding module from Streptomyces avermitilis NBRC14893.</title>
        <authorList>
            <person name="Ichinose H."/>
            <person name="Yoshida M."/>
            <person name="Fujimoto Z."/>
            <person name="Kaneko S."/>
        </authorList>
    </citation>
    <scope>FUNCTION</scope>
    <scope>CATALYTIC ACTIVITY</scope>
    <scope>BIOPHYSICOCHEMICAL PROPERTIES</scope>
    <scope>SUBSTRATE SPECIFICITY</scope>
    <source>
        <strain>ATCC 31267 / DSM 46492 / JCM 5070 / NBRC 14893 / NCIMB 12804 / NRRL 8165 / MA-4680</strain>
    </source>
</reference>
<reference evidence="9 10 11" key="4">
    <citation type="journal article" date="2010" name="J. Biol. Chem.">
        <title>Crystal structure of an Exo-1,5-{alpha}-L-arabinofuranosidase from Streptomyces avermitilis provides insights into the mechanism of substrate discrimination between exo- and endo-type enzymes in glycoside hydrolase family 43.</title>
        <authorList>
            <person name="Fujimoto Z."/>
            <person name="Ichinose H."/>
            <person name="Maehara T."/>
            <person name="Honda M."/>
            <person name="Kitaoka M."/>
            <person name="Kaneko S."/>
        </authorList>
    </citation>
    <scope>X-RAY CRYSTALLOGRAPHY (1.70 ANGSTROMS) OF 28-481 IN COMPLEX WITH SUBSTRATE</scope>
    <scope>BIOPHYSICOCHEMICAL PROPERTIES</scope>
    <scope>MUTAGENESIS OF ASP-47; ASP-162; ASN-186; TYR-219; GLU-223 AND LEU-316</scope>
    <source>
        <strain>ATCC 31267 / DSM 46492 / JCM 5070 / NBRC 14893 / NCIMB 12804 / NRRL 8165 / MA-4680</strain>
    </source>
</reference>
<comment type="function">
    <text evidence="2">Involved in the degradation of arabinan and is a key enzyme in the complete degradation of the plant cell wall. Catalyzes only the cleavage of terminal alpha-(1-&gt;5) arabinofuranosyl bonds of arabinan present in the arabinofuranosyl polysaccharides or oligosaccharides. It cannot act on other arabinose-containing polysaccharides and arabinoxylo-oligosaccharides.</text>
</comment>
<comment type="catalytic activity">
    <reaction evidence="2">
        <text>Hydrolysis of terminal non-reducing alpha-L-arabinofuranoside residues in alpha-L-arabinosides.</text>
        <dbReference type="EC" id="3.2.1.55"/>
    </reaction>
</comment>
<comment type="biophysicochemical properties">
    <kinetics>
        <KM evidence="3">0.5 mM for p-nitrophenyl-alpha-L-arabinofuranoside</KM>
        <text evidence="3">kcat is 6.5 min(-1) with p-nitrophenyl-alpha-L-arabinofuranoside as substrate.</text>
    </kinetics>
    <phDependence>
        <text evidence="2">Optimum pH is 6.0. Stable from pH 5.0 to pH 6.5.</text>
    </phDependence>
    <temperatureDependence>
        <text evidence="2">Optimum temperature is 45 degrees Celsius.</text>
    </temperatureDependence>
</comment>
<comment type="pathway">
    <text evidence="6">Glycan metabolism; L-arabinan degradation.</text>
</comment>
<comment type="subcellular location">
    <subcellularLocation>
        <location evidence="5">Secreted</location>
    </subcellularLocation>
</comment>
<comment type="domain">
    <text evidence="5">Organized into two domains: an N-terminal catalytic domain and a C-terminal arabinose-binding domain (ABD).</text>
</comment>
<comment type="similarity">
    <text evidence="5">Belongs to the glycosyl hydrolase 43 family.</text>
</comment>